<reference key="1">
    <citation type="journal article" date="1996" name="Dev. Biol.">
        <title>Platelet-activating factor acetylhydrolase expression and activity suggest a link between neuronal migration and platelet-activating factor.</title>
        <authorList>
            <person name="Albrecht U."/>
            <person name="Abu-Issa R."/>
            <person name="Raetz B."/>
            <person name="Hattori M."/>
            <person name="Aoki J."/>
            <person name="Arai H."/>
            <person name="Inoue K."/>
            <person name="Eichele G."/>
        </authorList>
    </citation>
    <scope>NUCLEOTIDE SEQUENCE [MRNA]</scope>
    <source>
        <strain>BALB/cJ</strain>
        <tissue>Brain</tissue>
    </source>
</reference>
<reference key="2">
    <citation type="journal article" date="2004" name="Genome Res.">
        <title>The status, quality, and expansion of the NIH full-length cDNA project: the Mammalian Gene Collection (MGC).</title>
        <authorList>
            <consortium name="The MGC Project Team"/>
        </authorList>
    </citation>
    <scope>NUCLEOTIDE SEQUENCE [LARGE SCALE MRNA]</scope>
    <source>
        <strain>C57BL/6J</strain>
        <tissue>Brain</tissue>
    </source>
</reference>
<reference key="3">
    <citation type="journal article" date="2003" name="Proc. Natl. Acad. Sci. U.S.A.">
        <title>Previously uncharacterized roles of platelet-activating factor acetylhydrolase 1b complex in mouse spermatogenesis.</title>
        <authorList>
            <person name="Yan W."/>
            <person name="Assadi A.H."/>
            <person name="Wynshaw-Boris A."/>
            <person name="Eichele G."/>
            <person name="Matzuk M.M."/>
            <person name="Clark G.D."/>
        </authorList>
    </citation>
    <scope>DISRUPTION PHENOTYPE</scope>
</reference>
<reference key="4">
    <citation type="journal article" date="2007" name="PLoS ONE">
        <title>The Pafah1b complex interacts with the reelin receptor VLDLR.</title>
        <authorList>
            <person name="Zhang G."/>
            <person name="Assadi A.H."/>
            <person name="McNeil R.S."/>
            <person name="Beffert U."/>
            <person name="Wynshaw-Boris A."/>
            <person name="Herz J."/>
            <person name="Clark G.D."/>
            <person name="D'Arcangelo G."/>
        </authorList>
    </citation>
    <scope>INTERACTION WITH VLDLR</scope>
</reference>
<reference key="5">
    <citation type="journal article" date="2010" name="Cell">
        <title>A tissue-specific atlas of mouse protein phosphorylation and expression.</title>
        <authorList>
            <person name="Huttlin E.L."/>
            <person name="Jedrychowski M.P."/>
            <person name="Elias J.E."/>
            <person name="Goswami T."/>
            <person name="Rad R."/>
            <person name="Beausoleil S.A."/>
            <person name="Villen J."/>
            <person name="Haas W."/>
            <person name="Sowa M.E."/>
            <person name="Gygi S.P."/>
        </authorList>
    </citation>
    <scope>IDENTIFICATION BY MASS SPECTROMETRY [LARGE SCALE ANALYSIS]</scope>
    <source>
        <tissue>Brain</tissue>
        <tissue>Brown adipose tissue</tissue>
        <tissue>Heart</tissue>
        <tissue>Kidney</tissue>
        <tissue>Lung</tissue>
        <tissue>Pancreas</tissue>
        <tissue>Spleen</tissue>
        <tissue>Testis</tissue>
    </source>
</reference>
<protein>
    <recommendedName>
        <fullName evidence="8">Platelet-activating factor acetylhydrolase IB subunit alpha1</fullName>
        <ecNumber evidence="4">3.1.1.47</ecNumber>
    </recommendedName>
    <alternativeName>
        <fullName>PAF acetylhydrolase 29 kDa subunit</fullName>
        <shortName>PAF-AH 29 kDa subunit</shortName>
    </alternativeName>
    <alternativeName>
        <fullName>PAF-AH subunit gamma</fullName>
        <shortName>PAFAH subunit gamma</shortName>
    </alternativeName>
</protein>
<dbReference type="EC" id="3.1.1.47" evidence="4"/>
<dbReference type="EMBL" id="U57746">
    <property type="protein sequence ID" value="AAC52996.1"/>
    <property type="molecule type" value="mRNA"/>
</dbReference>
<dbReference type="EMBL" id="BC067015">
    <property type="protein sequence ID" value="AAH67015.1"/>
    <property type="molecule type" value="mRNA"/>
</dbReference>
<dbReference type="CCDS" id="CCDS20979.1"/>
<dbReference type="RefSeq" id="NP_001344279.1">
    <property type="nucleotide sequence ID" value="NM_001357350.2"/>
</dbReference>
<dbReference type="RefSeq" id="NP_032802.1">
    <property type="nucleotide sequence ID" value="NM_008776.3"/>
</dbReference>
<dbReference type="RefSeq" id="XP_017177515.1">
    <property type="nucleotide sequence ID" value="XM_017322026.1"/>
</dbReference>
<dbReference type="RefSeq" id="XP_017177516.1">
    <property type="nucleotide sequence ID" value="XM_017322027.2"/>
</dbReference>
<dbReference type="SMR" id="Q61205"/>
<dbReference type="BioGRID" id="202017">
    <property type="interactions" value="8"/>
</dbReference>
<dbReference type="FunCoup" id="Q61205">
    <property type="interactions" value="943"/>
</dbReference>
<dbReference type="IntAct" id="Q61205">
    <property type="interactions" value="1"/>
</dbReference>
<dbReference type="STRING" id="10090.ENSMUSP00000005583"/>
<dbReference type="ChEMBL" id="CHEMBL3259482"/>
<dbReference type="iPTMnet" id="Q61205"/>
<dbReference type="PhosphoSitePlus" id="Q61205"/>
<dbReference type="SwissPalm" id="Q61205"/>
<dbReference type="REPRODUCTION-2DPAGE" id="Q61205"/>
<dbReference type="jPOST" id="Q61205"/>
<dbReference type="PaxDb" id="10090-ENSMUSP00000005583"/>
<dbReference type="ProteomicsDB" id="295448"/>
<dbReference type="Pumba" id="Q61205"/>
<dbReference type="Antibodypedia" id="30926">
    <property type="antibodies" value="289 antibodies from 25 providers"/>
</dbReference>
<dbReference type="DNASU" id="18476"/>
<dbReference type="Ensembl" id="ENSMUST00000005583.12">
    <property type="protein sequence ID" value="ENSMUSP00000005583.6"/>
    <property type="gene ID" value="ENSMUSG00000005447.13"/>
</dbReference>
<dbReference type="GeneID" id="18476"/>
<dbReference type="KEGG" id="mmu:18476"/>
<dbReference type="UCSC" id="uc009fsf.1">
    <property type="organism name" value="mouse"/>
</dbReference>
<dbReference type="AGR" id="MGI:108414"/>
<dbReference type="CTD" id="5050"/>
<dbReference type="MGI" id="MGI:108414">
    <property type="gene designation" value="Pafah1b3"/>
</dbReference>
<dbReference type="VEuPathDB" id="HostDB:ENSMUSG00000005447"/>
<dbReference type="eggNOG" id="KOG1388">
    <property type="taxonomic scope" value="Eukaryota"/>
</dbReference>
<dbReference type="GeneTree" id="ENSGT00950000183199"/>
<dbReference type="HOGENOM" id="CLU_051989_2_0_1"/>
<dbReference type="InParanoid" id="Q61205"/>
<dbReference type="OMA" id="QTQNVLW"/>
<dbReference type="OrthoDB" id="505607at2759"/>
<dbReference type="PhylomeDB" id="Q61205"/>
<dbReference type="TreeFam" id="TF323955"/>
<dbReference type="BRENDA" id="3.1.1.47">
    <property type="organism ID" value="3474"/>
</dbReference>
<dbReference type="Reactome" id="R-MMU-6811436">
    <property type="pathway name" value="COPI-independent Golgi-to-ER retrograde traffic"/>
</dbReference>
<dbReference type="BioGRID-ORCS" id="18476">
    <property type="hits" value="2 hits in 81 CRISPR screens"/>
</dbReference>
<dbReference type="ChiTaRS" id="Pafah1b3">
    <property type="organism name" value="mouse"/>
</dbReference>
<dbReference type="PRO" id="PR:Q61205"/>
<dbReference type="Proteomes" id="UP000000589">
    <property type="component" value="Chromosome 7"/>
</dbReference>
<dbReference type="RNAct" id="Q61205">
    <property type="molecule type" value="protein"/>
</dbReference>
<dbReference type="Bgee" id="ENSMUSG00000005447">
    <property type="expression patterns" value="Expressed in cortical plate and 272 other cell types or tissues"/>
</dbReference>
<dbReference type="ExpressionAtlas" id="Q61205">
    <property type="expression patterns" value="baseline and differential"/>
</dbReference>
<dbReference type="GO" id="GO:0008247">
    <property type="term" value="C:1-alkyl-2-acetylglycerophosphocholine esterase complex"/>
    <property type="evidence" value="ECO:0000250"/>
    <property type="project" value="UniProtKB"/>
</dbReference>
<dbReference type="GO" id="GO:0005737">
    <property type="term" value="C:cytoplasm"/>
    <property type="evidence" value="ECO:0000314"/>
    <property type="project" value="MGI"/>
</dbReference>
<dbReference type="GO" id="GO:0003847">
    <property type="term" value="F:1-alkyl-2-acetylglycerophosphocholine esterase activity"/>
    <property type="evidence" value="ECO:0000250"/>
    <property type="project" value="UniProtKB"/>
</dbReference>
<dbReference type="GO" id="GO:0047179">
    <property type="term" value="F:platelet-activating factor acetyltransferase activity"/>
    <property type="evidence" value="ECO:0007669"/>
    <property type="project" value="Ensembl"/>
</dbReference>
<dbReference type="GO" id="GO:0046982">
    <property type="term" value="F:protein heterodimerization activity"/>
    <property type="evidence" value="ECO:0000250"/>
    <property type="project" value="UniProtKB"/>
</dbReference>
<dbReference type="GO" id="GO:0042803">
    <property type="term" value="F:protein homodimerization activity"/>
    <property type="evidence" value="ECO:0000250"/>
    <property type="project" value="UniProtKB"/>
</dbReference>
<dbReference type="GO" id="GO:0044877">
    <property type="term" value="F:protein-containing complex binding"/>
    <property type="evidence" value="ECO:0007669"/>
    <property type="project" value="Ensembl"/>
</dbReference>
<dbReference type="GO" id="GO:0016042">
    <property type="term" value="P:lipid catabolic process"/>
    <property type="evidence" value="ECO:0007669"/>
    <property type="project" value="UniProtKB-KW"/>
</dbReference>
<dbReference type="GO" id="GO:0007283">
    <property type="term" value="P:spermatogenesis"/>
    <property type="evidence" value="ECO:0000315"/>
    <property type="project" value="MGI"/>
</dbReference>
<dbReference type="CDD" id="cd01820">
    <property type="entry name" value="PAF_acetylesterase_like"/>
    <property type="match status" value="1"/>
</dbReference>
<dbReference type="FunFam" id="3.40.50.1110:FF:000004">
    <property type="entry name" value="Platelet-activating factor acetylhydrolase IB subunit beta"/>
    <property type="match status" value="1"/>
</dbReference>
<dbReference type="Gene3D" id="3.40.50.1110">
    <property type="entry name" value="SGNH hydrolase"/>
    <property type="match status" value="1"/>
</dbReference>
<dbReference type="InterPro" id="IPR013830">
    <property type="entry name" value="SGNH_hydro"/>
</dbReference>
<dbReference type="InterPro" id="IPR036514">
    <property type="entry name" value="SGNH_hydro_sf"/>
</dbReference>
<dbReference type="PANTHER" id="PTHR11852">
    <property type="entry name" value="PLATELET-ACTIVATING FACTOR ACETYLHYDROLASE"/>
    <property type="match status" value="1"/>
</dbReference>
<dbReference type="PANTHER" id="PTHR11852:SF2">
    <property type="entry name" value="PLATELET-ACTIVATING FACTOR ACETYLHYDROLASE IB SUBUNIT ALPHA1"/>
    <property type="match status" value="1"/>
</dbReference>
<dbReference type="Pfam" id="PF13472">
    <property type="entry name" value="Lipase_GDSL_2"/>
    <property type="match status" value="1"/>
</dbReference>
<dbReference type="SUPFAM" id="SSF52266">
    <property type="entry name" value="SGNH hydrolase"/>
    <property type="match status" value="1"/>
</dbReference>
<feature type="initiator methionine" description="Removed" evidence="3">
    <location>
        <position position="1"/>
    </location>
</feature>
<feature type="chain" id="PRO_0000058156" description="Platelet-activating factor acetylhydrolase IB subunit alpha1">
    <location>
        <begin position="2"/>
        <end position="232"/>
    </location>
</feature>
<feature type="region of interest" description="Disordered" evidence="5">
    <location>
        <begin position="1"/>
        <end position="20"/>
    </location>
</feature>
<feature type="active site" evidence="4">
    <location>
        <position position="48"/>
    </location>
</feature>
<feature type="active site" evidence="4">
    <location>
        <position position="193"/>
    </location>
</feature>
<feature type="active site" evidence="4">
    <location>
        <position position="196"/>
    </location>
</feature>
<feature type="modified residue" description="N-acetylserine" evidence="3">
    <location>
        <position position="2"/>
    </location>
</feature>
<feature type="modified residue" description="Phosphoserine" evidence="3">
    <location>
        <position position="2"/>
    </location>
</feature>
<name>PA1B3_MOUSE</name>
<accession>Q61205</accession>
<proteinExistence type="evidence at protein level"/>
<gene>
    <name evidence="9" type="primary">Pafah1b3</name>
    <name type="synonym">Pafahg</name>
</gene>
<organism>
    <name type="scientific">Mus musculus</name>
    <name type="common">Mouse</name>
    <dbReference type="NCBI Taxonomy" id="10090"/>
    <lineage>
        <taxon>Eukaryota</taxon>
        <taxon>Metazoa</taxon>
        <taxon>Chordata</taxon>
        <taxon>Craniata</taxon>
        <taxon>Vertebrata</taxon>
        <taxon>Euteleostomi</taxon>
        <taxon>Mammalia</taxon>
        <taxon>Eutheria</taxon>
        <taxon>Euarchontoglires</taxon>
        <taxon>Glires</taxon>
        <taxon>Rodentia</taxon>
        <taxon>Myomorpha</taxon>
        <taxon>Muroidea</taxon>
        <taxon>Muridae</taxon>
        <taxon>Murinae</taxon>
        <taxon>Mus</taxon>
        <taxon>Mus</taxon>
    </lineage>
</organism>
<sequence>MSGEGENPASKPTPVQDVQGDGRWMSLHHRFVADSKDKEPEVVFIGDSLVQLMHQCEIWRELFSPLHALNFGIGGDSTQHVLWRLENGELEHIRPKIVVVWVGTNNHSHTAEQVTGGIKAIVQLVNKLQPQARVVVLGLLPRGQHPNPLREKNRQVNELVRAALAGYPRAHFLDADPGFVHSDGTISHHDMYDYLHLSRLGYTPVCRALHSLLLRLLAQDQGQGIPLPETAS</sequence>
<comment type="function">
    <text evidence="4">Alpha1 catalytic subunit of the cytosolic type I platelet-activating factor (PAF) acetylhydrolase (PAF-AH (I)) heterotetrameric enzyme that catalyzes the hydrolyze of the acetyl group at the sn-2 position of PAF and its analogs and modulates the action of PAF. The activity and substrate specificity of PAF-AH (I) are affected by its subunit composition. Both alpha1/alpha1 homodimer (PAFAH1B3/PAFAH1B3 homodimer) and alpha1/alpha2 heterodimer(PAFAH1B3/PAFAH1B2 heterodimer) hydrolyze 1-O-alkyl-2-acetyl-sn-glycero-3-phosphoric acid (AAGPA) more efficiently than PAF, but they have little hydrolytic activity towards 1-O-alkyl-2-acetyl-sn-glycero-3-phosphorylethanolamine (AAGPE). Plays an important role during the development of brain.</text>
</comment>
<comment type="catalytic activity">
    <reaction evidence="4">
        <text>a 1-O-alkyl-2-acetyl-sn-glycero-3-phosphocholine + H2O = a 1-O-alkyl-sn-glycero-3-phosphocholine + acetate + H(+)</text>
        <dbReference type="Rhea" id="RHEA:17777"/>
        <dbReference type="ChEBI" id="CHEBI:15377"/>
        <dbReference type="ChEBI" id="CHEBI:15378"/>
        <dbReference type="ChEBI" id="CHEBI:30089"/>
        <dbReference type="ChEBI" id="CHEBI:30909"/>
        <dbReference type="ChEBI" id="CHEBI:36707"/>
        <dbReference type="EC" id="3.1.1.47"/>
    </reaction>
    <physiologicalReaction direction="left-to-right" evidence="4">
        <dbReference type="Rhea" id="RHEA:17778"/>
    </physiologicalReaction>
</comment>
<comment type="catalytic activity">
    <reaction evidence="4">
        <text>1-O-hexadecyl-2-acetyl-sn-glycero-3-phosphocholine + H2O = 1-O-hexadecyl-sn-glycero-3-phosphocholine + acetate + H(+)</text>
        <dbReference type="Rhea" id="RHEA:40479"/>
        <dbReference type="ChEBI" id="CHEBI:15377"/>
        <dbReference type="ChEBI" id="CHEBI:15378"/>
        <dbReference type="ChEBI" id="CHEBI:30089"/>
        <dbReference type="ChEBI" id="CHEBI:44811"/>
        <dbReference type="ChEBI" id="CHEBI:64496"/>
    </reaction>
    <physiologicalReaction direction="left-to-right" evidence="4">
        <dbReference type="Rhea" id="RHEA:40480"/>
    </physiologicalReaction>
</comment>
<comment type="catalytic activity">
    <reaction evidence="4">
        <text>1-O-hexadecyl-2-acetyl-sn-glycero-3-phosphate + H2O = 1-O-hexadecyl-sn-glycero-3-phosphate + acetate + H(+)</text>
        <dbReference type="Rhea" id="RHEA:41704"/>
        <dbReference type="ChEBI" id="CHEBI:15377"/>
        <dbReference type="ChEBI" id="CHEBI:15378"/>
        <dbReference type="ChEBI" id="CHEBI:30089"/>
        <dbReference type="ChEBI" id="CHEBI:77580"/>
        <dbReference type="ChEBI" id="CHEBI:78385"/>
    </reaction>
    <physiologicalReaction direction="left-to-right" evidence="4">
        <dbReference type="Rhea" id="RHEA:41705"/>
    </physiologicalReaction>
</comment>
<comment type="activity regulation">
    <text evidence="4">Beta subunit (PAFAH1B1) inhibits the acetylhydrolase activity of the alpha1/alpha1 catalytic homodimer.</text>
</comment>
<comment type="subunit">
    <text evidence="4 7">Forms a catalytic dimer which is either homodimer (alpha1/alpha1 homodimer) or heterodimer with PAFAH1B2 (alpha1/alpha2 heterodimer). Component of the cytosolic (PAF-AH (I)) heterotetrameric enzyme, which is composed of PAFAH1B1 (beta), PAFAH1B2 (alpha2) and PAFAH1B3 (alpha1) subunits. The catalytic activity of the enzyme resides in the alpha1 (PAFAH1B3) and alpha2 (PAFAH1B2) subunits, whereas the beta subunit (PAFAH1B1) has regulatory activity. Trimer formation is not essential for the catalytic activity (By similarity). Interacts with VLDLR; this interaction may modulate the Reelin pathway (PubMed:17330141).</text>
</comment>
<comment type="interaction">
    <interactant intactId="EBI-1007637">
        <id>Q61205</id>
    </interactant>
    <interactant intactId="EBI-917499">
        <id>P63005</id>
        <label>Pafah1b1</label>
    </interactant>
    <organismsDiffer>false</organismsDiffer>
    <experiments>2</experiments>
</comment>
<comment type="subcellular location">
    <subcellularLocation>
        <location>Cytoplasm</location>
    </subcellularLocation>
</comment>
<comment type="developmental stage">
    <text>Expressed already by the time of neurulation. By 10.5 dpc, expression is abundant in the developing central and peripheral nervous systems. Major sites include the neuroepithelium of the fore-, mid-, and hindbrain, the spinal cord, the dorsal root, and cranial ganglia. In adult brain, expression is greatly diminished.</text>
</comment>
<comment type="disruption phenotype">
    <text evidence="6">Knockout mice which are homozygous for the PAFAH1B2 gene appear developmentally normal, and are born at the expected Mendelian rate. Mice have normal fertility and normal spermatogenesis. Double mutant female mice which are homozygous for PAFAH1B2 and PAFAH1B3 are grossly normal and fertile, whereas double-mutant males are infertile. Double mutan mice manifest an earlier disturbance of spermatogenesis with an onset at preleptotene or leptotene stages of meiosis.</text>
</comment>
<comment type="miscellaneous">
    <text evidence="1 2 3 4">Originally the subunits of the type I platelet-activating factor (PAF) acetylhydrolase was named alpha (PAFAH1B1), beta (PAFAH1B2) and gamma (PAFAH1B3) (By similarity). Now these subunits have been renamed beta (PAFAH1B1), alpha2 (PAFAH1B2) and alpha1 (PAFAH1B3) respectively (By similarity).</text>
</comment>
<comment type="similarity">
    <text evidence="8">Belongs to the 'GDSL' lipolytic enzyme family. Platelet-activating factor acetylhydrolase IB beta/gamma subunits subfamily.</text>
</comment>
<keyword id="KW-0007">Acetylation</keyword>
<keyword id="KW-0963">Cytoplasm</keyword>
<keyword id="KW-0378">Hydrolase</keyword>
<keyword id="KW-0442">Lipid degradation</keyword>
<keyword id="KW-0443">Lipid metabolism</keyword>
<keyword id="KW-0597">Phosphoprotein</keyword>
<keyword id="KW-1185">Reference proteome</keyword>
<evidence type="ECO:0000250" key="1">
    <source>
        <dbReference type="UniProtKB" id="P43034"/>
    </source>
</evidence>
<evidence type="ECO:0000250" key="2">
    <source>
        <dbReference type="UniProtKB" id="P68402"/>
    </source>
</evidence>
<evidence type="ECO:0000250" key="3">
    <source>
        <dbReference type="UniProtKB" id="Q15102"/>
    </source>
</evidence>
<evidence type="ECO:0000250" key="4">
    <source>
        <dbReference type="UniProtKB" id="Q29460"/>
    </source>
</evidence>
<evidence type="ECO:0000256" key="5">
    <source>
        <dbReference type="SAM" id="MobiDB-lite"/>
    </source>
</evidence>
<evidence type="ECO:0000269" key="6">
    <source>
    </source>
</evidence>
<evidence type="ECO:0000269" key="7">
    <source>
    </source>
</evidence>
<evidence type="ECO:0000305" key="8"/>
<evidence type="ECO:0000312" key="9">
    <source>
        <dbReference type="EMBL" id="AAC52996.1"/>
    </source>
</evidence>